<proteinExistence type="inferred from homology"/>
<reference key="1">
    <citation type="submission" date="2008-12" db="EMBL/GenBank/DDBJ databases">
        <title>Complete sequence of chromosome of Shewanella baltica OS223.</title>
        <authorList>
            <consortium name="US DOE Joint Genome Institute"/>
            <person name="Lucas S."/>
            <person name="Copeland A."/>
            <person name="Lapidus A."/>
            <person name="Glavina del Rio T."/>
            <person name="Dalin E."/>
            <person name="Tice H."/>
            <person name="Bruce D."/>
            <person name="Goodwin L."/>
            <person name="Pitluck S."/>
            <person name="Chertkov O."/>
            <person name="Meincke L."/>
            <person name="Brettin T."/>
            <person name="Detter J.C."/>
            <person name="Han C."/>
            <person name="Kuske C.R."/>
            <person name="Larimer F."/>
            <person name="Land M."/>
            <person name="Hauser L."/>
            <person name="Kyrpides N."/>
            <person name="Ovchinnikova G."/>
            <person name="Brettar I."/>
            <person name="Rodrigues J."/>
            <person name="Konstantinidis K."/>
            <person name="Tiedje J."/>
        </authorList>
    </citation>
    <scope>NUCLEOTIDE SEQUENCE [LARGE SCALE GENOMIC DNA]</scope>
    <source>
        <strain>OS223</strain>
    </source>
</reference>
<comment type="function">
    <text evidence="1">Catalyzes the conversion of L-arabinose to L-ribulose.</text>
</comment>
<comment type="catalytic activity">
    <reaction evidence="1">
        <text>beta-L-arabinopyranose = L-ribulose</text>
        <dbReference type="Rhea" id="RHEA:14821"/>
        <dbReference type="ChEBI" id="CHEBI:16880"/>
        <dbReference type="ChEBI" id="CHEBI:40886"/>
        <dbReference type="EC" id="5.3.1.4"/>
    </reaction>
</comment>
<comment type="cofactor">
    <cofactor evidence="1">
        <name>Mn(2+)</name>
        <dbReference type="ChEBI" id="CHEBI:29035"/>
    </cofactor>
    <text evidence="1">Binds 1 Mn(2+) ion per subunit.</text>
</comment>
<comment type="pathway">
    <text evidence="1">Carbohydrate degradation; L-arabinose degradation via L-ribulose; D-xylulose 5-phosphate from L-arabinose (bacterial route): step 1/3.</text>
</comment>
<comment type="similarity">
    <text evidence="1">Belongs to the arabinose isomerase family.</text>
</comment>
<sequence length="500" mass="55649">MKAFKQKQVWFVTGSQDLYGPKVLEQVAKNSEQIVHGFNQSDAISMEVVYKPTVKSPREIYAVCQAANSDENCVGVILWMHTFSPAKMWIAGLNELSKPFMHLHTQFNAELPWADINMNYMNTHQSAHGCREFGYIGTRMRKERKVVVGHWQTNDVQAQVDDWCRAAAGWNESQNLRIARFGDNMRQVAVTEGDKVAAQIQFGYEVHAYSLGELNDAINAVADNDITAQIDRYASEYVISNELFNDEYQLDRLRKEAQIELGLTQFLKDGEFGAFTNCFENLTGMTGLPGLATQRLMANGIGYGGEGDWKTAAMVRIMKVMGQGRTGGTSFMEDYTYNFGVTDQVLGAHMLEVCPSIAAAKPRLEVHRHTIGVRCDVPRLLFTGKAGPAINVSTIDLGNRFRIILNELDTVTPPQELPNLPVASALWEPRPNLSIAAAAWIHAGGAHHSAYSQAISTDNIVDFAEMAGAELVIIDADTRIRQFKNELRQNSVYYGLARGL</sequence>
<dbReference type="EC" id="5.3.1.4" evidence="1"/>
<dbReference type="EMBL" id="CP001252">
    <property type="protein sequence ID" value="ACK46643.1"/>
    <property type="molecule type" value="Genomic_DNA"/>
</dbReference>
<dbReference type="RefSeq" id="WP_012587646.1">
    <property type="nucleotide sequence ID" value="NC_011663.1"/>
</dbReference>
<dbReference type="SMR" id="B8EEN5"/>
<dbReference type="KEGG" id="sbp:Sbal223_2140"/>
<dbReference type="HOGENOM" id="CLU_045663_0_0_6"/>
<dbReference type="UniPathway" id="UPA00145">
    <property type="reaction ID" value="UER00565"/>
</dbReference>
<dbReference type="Proteomes" id="UP000002507">
    <property type="component" value="Chromosome"/>
</dbReference>
<dbReference type="GO" id="GO:0005829">
    <property type="term" value="C:cytosol"/>
    <property type="evidence" value="ECO:0007669"/>
    <property type="project" value="TreeGrafter"/>
</dbReference>
<dbReference type="GO" id="GO:0008733">
    <property type="term" value="F:L-arabinose isomerase activity"/>
    <property type="evidence" value="ECO:0007669"/>
    <property type="project" value="UniProtKB-UniRule"/>
</dbReference>
<dbReference type="GO" id="GO:0030145">
    <property type="term" value="F:manganese ion binding"/>
    <property type="evidence" value="ECO:0007669"/>
    <property type="project" value="UniProtKB-UniRule"/>
</dbReference>
<dbReference type="GO" id="GO:0019569">
    <property type="term" value="P:L-arabinose catabolic process to xylulose 5-phosphate"/>
    <property type="evidence" value="ECO:0007669"/>
    <property type="project" value="UniProtKB-UniRule"/>
</dbReference>
<dbReference type="CDD" id="cd03557">
    <property type="entry name" value="L-arabinose_isomerase"/>
    <property type="match status" value="1"/>
</dbReference>
<dbReference type="Gene3D" id="3.40.50.10940">
    <property type="match status" value="1"/>
</dbReference>
<dbReference type="HAMAP" id="MF_00519">
    <property type="entry name" value="Arabinose_Isome"/>
    <property type="match status" value="1"/>
</dbReference>
<dbReference type="InterPro" id="IPR024664">
    <property type="entry name" value="Ara_Isoase_C"/>
</dbReference>
<dbReference type="InterPro" id="IPR055390">
    <property type="entry name" value="AraA_central"/>
</dbReference>
<dbReference type="InterPro" id="IPR055389">
    <property type="entry name" value="AraA_N"/>
</dbReference>
<dbReference type="InterPro" id="IPR038583">
    <property type="entry name" value="AraA_N_sf"/>
</dbReference>
<dbReference type="InterPro" id="IPR004216">
    <property type="entry name" value="Fuc/Ara_isomerase_C"/>
</dbReference>
<dbReference type="InterPro" id="IPR009015">
    <property type="entry name" value="Fucose_isomerase_N/cen_sf"/>
</dbReference>
<dbReference type="InterPro" id="IPR003762">
    <property type="entry name" value="Lara_isomerase"/>
</dbReference>
<dbReference type="NCBIfam" id="NF002795">
    <property type="entry name" value="PRK02929.1"/>
    <property type="match status" value="1"/>
</dbReference>
<dbReference type="PANTHER" id="PTHR38464">
    <property type="entry name" value="L-ARABINOSE ISOMERASE"/>
    <property type="match status" value="1"/>
</dbReference>
<dbReference type="PANTHER" id="PTHR38464:SF1">
    <property type="entry name" value="L-ARABINOSE ISOMERASE"/>
    <property type="match status" value="1"/>
</dbReference>
<dbReference type="Pfam" id="PF24856">
    <property type="entry name" value="AraA_central"/>
    <property type="match status" value="1"/>
</dbReference>
<dbReference type="Pfam" id="PF02610">
    <property type="entry name" value="AraA_N"/>
    <property type="match status" value="1"/>
</dbReference>
<dbReference type="Pfam" id="PF11762">
    <property type="entry name" value="Arabinose_Iso_C"/>
    <property type="match status" value="1"/>
</dbReference>
<dbReference type="PIRSF" id="PIRSF001478">
    <property type="entry name" value="L-ara_isomerase"/>
    <property type="match status" value="1"/>
</dbReference>
<dbReference type="SUPFAM" id="SSF50443">
    <property type="entry name" value="FucI/AraA C-terminal domain-like"/>
    <property type="match status" value="1"/>
</dbReference>
<dbReference type="SUPFAM" id="SSF53743">
    <property type="entry name" value="FucI/AraA N-terminal and middle domains"/>
    <property type="match status" value="1"/>
</dbReference>
<gene>
    <name evidence="1" type="primary">araA</name>
    <name type="ordered locus">Sbal223_2140</name>
</gene>
<evidence type="ECO:0000255" key="1">
    <source>
        <dbReference type="HAMAP-Rule" id="MF_00519"/>
    </source>
</evidence>
<keyword id="KW-0054">Arabinose catabolism</keyword>
<keyword id="KW-0119">Carbohydrate metabolism</keyword>
<keyword id="KW-0413">Isomerase</keyword>
<keyword id="KW-0464">Manganese</keyword>
<keyword id="KW-0479">Metal-binding</keyword>
<protein>
    <recommendedName>
        <fullName evidence="1">L-arabinose isomerase</fullName>
        <ecNumber evidence="1">5.3.1.4</ecNumber>
    </recommendedName>
</protein>
<feature type="chain" id="PRO_1000189550" description="L-arabinose isomerase">
    <location>
        <begin position="1"/>
        <end position="500"/>
    </location>
</feature>
<feature type="binding site" evidence="1">
    <location>
        <position position="306"/>
    </location>
    <ligand>
        <name>Mn(2+)</name>
        <dbReference type="ChEBI" id="CHEBI:29035"/>
    </ligand>
</feature>
<feature type="binding site" evidence="1">
    <location>
        <position position="333"/>
    </location>
    <ligand>
        <name>Mn(2+)</name>
        <dbReference type="ChEBI" id="CHEBI:29035"/>
    </ligand>
</feature>
<feature type="binding site" evidence="1">
    <location>
        <position position="349"/>
    </location>
    <ligand>
        <name>Mn(2+)</name>
        <dbReference type="ChEBI" id="CHEBI:29035"/>
    </ligand>
</feature>
<feature type="binding site" evidence="1">
    <location>
        <position position="448"/>
    </location>
    <ligand>
        <name>Mn(2+)</name>
        <dbReference type="ChEBI" id="CHEBI:29035"/>
    </ligand>
</feature>
<organism>
    <name type="scientific">Shewanella baltica (strain OS223)</name>
    <dbReference type="NCBI Taxonomy" id="407976"/>
    <lineage>
        <taxon>Bacteria</taxon>
        <taxon>Pseudomonadati</taxon>
        <taxon>Pseudomonadota</taxon>
        <taxon>Gammaproteobacteria</taxon>
        <taxon>Alteromonadales</taxon>
        <taxon>Shewanellaceae</taxon>
        <taxon>Shewanella</taxon>
    </lineage>
</organism>
<accession>B8EEN5</accession>
<name>ARAA_SHEB2</name>